<organism>
    <name type="scientific">Brachyspira hyodysenteriae (strain ATCC 49526 / WA1)</name>
    <dbReference type="NCBI Taxonomy" id="565034"/>
    <lineage>
        <taxon>Bacteria</taxon>
        <taxon>Pseudomonadati</taxon>
        <taxon>Spirochaetota</taxon>
        <taxon>Spirochaetia</taxon>
        <taxon>Brachyspirales</taxon>
        <taxon>Brachyspiraceae</taxon>
        <taxon>Brachyspira</taxon>
    </lineage>
</organism>
<feature type="chain" id="PRO_1000185248" description="Formate--tetrahydrofolate ligase">
    <location>
        <begin position="1"/>
        <end position="553"/>
    </location>
</feature>
<feature type="binding site" evidence="1">
    <location>
        <begin position="65"/>
        <end position="72"/>
    </location>
    <ligand>
        <name>ATP</name>
        <dbReference type="ChEBI" id="CHEBI:30616"/>
    </ligand>
</feature>
<keyword id="KW-0067">ATP-binding</keyword>
<keyword id="KW-0436">Ligase</keyword>
<keyword id="KW-0547">Nucleotide-binding</keyword>
<keyword id="KW-0554">One-carbon metabolism</keyword>
<dbReference type="EC" id="6.3.4.3" evidence="1"/>
<dbReference type="EMBL" id="CP001357">
    <property type="protein sequence ID" value="ACN84841.1"/>
    <property type="molecule type" value="Genomic_DNA"/>
</dbReference>
<dbReference type="RefSeq" id="WP_012671871.1">
    <property type="nucleotide sequence ID" value="NC_012225.1"/>
</dbReference>
<dbReference type="SMR" id="C0QX38"/>
<dbReference type="STRING" id="565034.BHWA1_02387"/>
<dbReference type="KEGG" id="bhy:BHWA1_02387"/>
<dbReference type="eggNOG" id="COG2759">
    <property type="taxonomic scope" value="Bacteria"/>
</dbReference>
<dbReference type="HOGENOM" id="CLU_003601_3_3_12"/>
<dbReference type="UniPathway" id="UPA00193"/>
<dbReference type="Proteomes" id="UP000001803">
    <property type="component" value="Chromosome"/>
</dbReference>
<dbReference type="GO" id="GO:0005524">
    <property type="term" value="F:ATP binding"/>
    <property type="evidence" value="ECO:0007669"/>
    <property type="project" value="UniProtKB-UniRule"/>
</dbReference>
<dbReference type="GO" id="GO:0004329">
    <property type="term" value="F:formate-tetrahydrofolate ligase activity"/>
    <property type="evidence" value="ECO:0007669"/>
    <property type="project" value="UniProtKB-UniRule"/>
</dbReference>
<dbReference type="GO" id="GO:0035999">
    <property type="term" value="P:tetrahydrofolate interconversion"/>
    <property type="evidence" value="ECO:0007669"/>
    <property type="project" value="UniProtKB-UniRule"/>
</dbReference>
<dbReference type="CDD" id="cd00477">
    <property type="entry name" value="FTHFS"/>
    <property type="match status" value="1"/>
</dbReference>
<dbReference type="FunFam" id="3.30.1510.10:FF:000001">
    <property type="entry name" value="Formate--tetrahydrofolate ligase"/>
    <property type="match status" value="1"/>
</dbReference>
<dbReference type="FunFam" id="3.10.410.10:FF:000001">
    <property type="entry name" value="Putative formate--tetrahydrofolate ligase"/>
    <property type="match status" value="1"/>
</dbReference>
<dbReference type="Gene3D" id="3.30.1510.10">
    <property type="entry name" value="Domain 2, N(10)-formyltetrahydrofolate synthetase"/>
    <property type="match status" value="1"/>
</dbReference>
<dbReference type="Gene3D" id="3.10.410.10">
    <property type="entry name" value="Formyltetrahydrofolate synthetase, domain 3"/>
    <property type="match status" value="1"/>
</dbReference>
<dbReference type="Gene3D" id="3.40.50.300">
    <property type="entry name" value="P-loop containing nucleotide triphosphate hydrolases"/>
    <property type="match status" value="1"/>
</dbReference>
<dbReference type="HAMAP" id="MF_01543">
    <property type="entry name" value="FTHFS"/>
    <property type="match status" value="1"/>
</dbReference>
<dbReference type="InterPro" id="IPR000559">
    <property type="entry name" value="Formate_THF_ligase"/>
</dbReference>
<dbReference type="InterPro" id="IPR020628">
    <property type="entry name" value="Formate_THF_ligase_CS"/>
</dbReference>
<dbReference type="InterPro" id="IPR027417">
    <property type="entry name" value="P-loop_NTPase"/>
</dbReference>
<dbReference type="NCBIfam" id="NF010030">
    <property type="entry name" value="PRK13505.1"/>
    <property type="match status" value="1"/>
</dbReference>
<dbReference type="Pfam" id="PF01268">
    <property type="entry name" value="FTHFS"/>
    <property type="match status" value="1"/>
</dbReference>
<dbReference type="SUPFAM" id="SSF52540">
    <property type="entry name" value="P-loop containing nucleoside triphosphate hydrolases"/>
    <property type="match status" value="1"/>
</dbReference>
<dbReference type="PROSITE" id="PS00722">
    <property type="entry name" value="FTHFS_2"/>
    <property type="match status" value="1"/>
</dbReference>
<evidence type="ECO:0000255" key="1">
    <source>
        <dbReference type="HAMAP-Rule" id="MF_01543"/>
    </source>
</evidence>
<protein>
    <recommendedName>
        <fullName evidence="1">Formate--tetrahydrofolate ligase</fullName>
        <ecNumber evidence="1">6.3.4.3</ecNumber>
    </recommendedName>
    <alternativeName>
        <fullName evidence="1">Formyltetrahydrofolate synthetase</fullName>
        <shortName evidence="1">FHS</shortName>
        <shortName evidence="1">FTHFS</shortName>
    </alternativeName>
</protein>
<accession>C0QX38</accession>
<name>FTHS_BRAHW</name>
<reference key="1">
    <citation type="journal article" date="2009" name="PLoS ONE">
        <title>Genome sequence of the pathogenic intestinal spirochete Brachyspira hyodysenteriae reveals adaptations to its lifestyle in the porcine large intestine.</title>
        <authorList>
            <person name="Bellgard M.I."/>
            <person name="Wanchanthuek P."/>
            <person name="La T."/>
            <person name="Ryan K."/>
            <person name="Moolhuijzen P."/>
            <person name="Albertyn Z."/>
            <person name="Shaban B."/>
            <person name="Motro Y."/>
            <person name="Dunn D.S."/>
            <person name="Schibeci D."/>
            <person name="Hunter A."/>
            <person name="Barrero R."/>
            <person name="Phillips N.D."/>
            <person name="Hampson D.J."/>
        </authorList>
    </citation>
    <scope>NUCLEOTIDE SEQUENCE [LARGE SCALE GENOMIC DNA]</scope>
    <source>
        <strain>ATCC 49526 / WA1</strain>
    </source>
</reference>
<sequence>MKTDIEIAQECKLERIEKIAEKLNLTDDDYEVYGKYKAKIELSLLNKLKDKKDGKLVLVTAITPTPAGEGKSTVTIGLTQGLNKIGKNAVAALREPSLGPVFGIKGGACGGGYSQIVPMEDINLHFNGDFHAISSAHNLISACIDNHIKQGNELKIDINKIVFKRVLDMNDRALRDIVIGLGGSENGVVRQSSFQITVSSEIMAILCLSNSLMDLKEKIGNVIFAYDINDNPLRVKDLKIEGAACTLLKDAIKPNLVQTLENTPVIVHGGPFANIAHGCNSILATKMALKLSDYTITEAGFAADLGAEKFLDIKCRLAGLKPNCIVLVATIRALKHHGGASDINKEDIEALTKGFENLDKHIENMQKYNVPVVVAINKFVSDTDKEIECITKHCESKGIDISLCEVWAKGGEGAIELSHKVLKAASEESNYKPLYELEKSIKEKIETICKEIYSAGEVKFSNKALKMMKKIENMGFGNLPICISKTQKSISDNPALLNAPKGYTLNIDEIKLASGAGFIIAMAGGIIDMPGLPKIPVACNIDIDENGKIKGLF</sequence>
<proteinExistence type="inferred from homology"/>
<comment type="catalytic activity">
    <reaction evidence="1">
        <text>(6S)-5,6,7,8-tetrahydrofolate + formate + ATP = (6R)-10-formyltetrahydrofolate + ADP + phosphate</text>
        <dbReference type="Rhea" id="RHEA:20221"/>
        <dbReference type="ChEBI" id="CHEBI:15740"/>
        <dbReference type="ChEBI" id="CHEBI:30616"/>
        <dbReference type="ChEBI" id="CHEBI:43474"/>
        <dbReference type="ChEBI" id="CHEBI:57453"/>
        <dbReference type="ChEBI" id="CHEBI:195366"/>
        <dbReference type="ChEBI" id="CHEBI:456216"/>
        <dbReference type="EC" id="6.3.4.3"/>
    </reaction>
</comment>
<comment type="pathway">
    <text evidence="1">One-carbon metabolism; tetrahydrofolate interconversion.</text>
</comment>
<comment type="similarity">
    <text evidence="1">Belongs to the formate--tetrahydrofolate ligase family.</text>
</comment>
<gene>
    <name evidence="1" type="primary">fhs</name>
    <name type="ordered locus">BHWA1_02387</name>
</gene>